<protein>
    <recommendedName>
        <fullName evidence="1">Pantothenate synthetase</fullName>
        <shortName evidence="1">PS</shortName>
        <ecNumber evidence="1">6.3.2.1</ecNumber>
    </recommendedName>
    <alternativeName>
        <fullName evidence="1">Pantoate--beta-alanine ligase</fullName>
    </alternativeName>
    <alternativeName>
        <fullName evidence="1">Pantoate-activating enzyme</fullName>
    </alternativeName>
</protein>
<keyword id="KW-0067">ATP-binding</keyword>
<keyword id="KW-0963">Cytoplasm</keyword>
<keyword id="KW-0436">Ligase</keyword>
<keyword id="KW-0547">Nucleotide-binding</keyword>
<keyword id="KW-0566">Pantothenate biosynthesis</keyword>
<name>PANC_SALTI</name>
<evidence type="ECO:0000255" key="1">
    <source>
        <dbReference type="HAMAP-Rule" id="MF_00158"/>
    </source>
</evidence>
<feature type="chain" id="PRO_0000128265" description="Pantothenate synthetase">
    <location>
        <begin position="1"/>
        <end position="284"/>
    </location>
</feature>
<feature type="active site" description="Proton donor" evidence="1">
    <location>
        <position position="37"/>
    </location>
</feature>
<feature type="binding site" evidence="1">
    <location>
        <begin position="30"/>
        <end position="37"/>
    </location>
    <ligand>
        <name>ATP</name>
        <dbReference type="ChEBI" id="CHEBI:30616"/>
    </ligand>
</feature>
<feature type="binding site" evidence="1">
    <location>
        <position position="61"/>
    </location>
    <ligand>
        <name>(R)-pantoate</name>
        <dbReference type="ChEBI" id="CHEBI:15980"/>
    </ligand>
</feature>
<feature type="binding site" evidence="1">
    <location>
        <position position="61"/>
    </location>
    <ligand>
        <name>beta-alanine</name>
        <dbReference type="ChEBI" id="CHEBI:57966"/>
    </ligand>
</feature>
<feature type="binding site" evidence="1">
    <location>
        <begin position="149"/>
        <end position="152"/>
    </location>
    <ligand>
        <name>ATP</name>
        <dbReference type="ChEBI" id="CHEBI:30616"/>
    </ligand>
</feature>
<feature type="binding site" evidence="1">
    <location>
        <position position="155"/>
    </location>
    <ligand>
        <name>(R)-pantoate</name>
        <dbReference type="ChEBI" id="CHEBI:15980"/>
    </ligand>
</feature>
<feature type="binding site" evidence="1">
    <location>
        <position position="178"/>
    </location>
    <ligand>
        <name>ATP</name>
        <dbReference type="ChEBI" id="CHEBI:30616"/>
    </ligand>
</feature>
<feature type="binding site" evidence="1">
    <location>
        <begin position="186"/>
        <end position="189"/>
    </location>
    <ligand>
        <name>ATP</name>
        <dbReference type="ChEBI" id="CHEBI:30616"/>
    </ligand>
</feature>
<comment type="function">
    <text evidence="1">Catalyzes the condensation of pantoate with beta-alanine in an ATP-dependent reaction via a pantoyl-adenylate intermediate.</text>
</comment>
<comment type="catalytic activity">
    <reaction evidence="1">
        <text>(R)-pantoate + beta-alanine + ATP = (R)-pantothenate + AMP + diphosphate + H(+)</text>
        <dbReference type="Rhea" id="RHEA:10912"/>
        <dbReference type="ChEBI" id="CHEBI:15378"/>
        <dbReference type="ChEBI" id="CHEBI:15980"/>
        <dbReference type="ChEBI" id="CHEBI:29032"/>
        <dbReference type="ChEBI" id="CHEBI:30616"/>
        <dbReference type="ChEBI" id="CHEBI:33019"/>
        <dbReference type="ChEBI" id="CHEBI:57966"/>
        <dbReference type="ChEBI" id="CHEBI:456215"/>
        <dbReference type="EC" id="6.3.2.1"/>
    </reaction>
</comment>
<comment type="pathway">
    <text evidence="1">Cofactor biosynthesis; (R)-pantothenate biosynthesis; (R)-pantothenate from (R)-pantoate and beta-alanine: step 1/1.</text>
</comment>
<comment type="subunit">
    <text evidence="1">Homodimer.</text>
</comment>
<comment type="subcellular location">
    <subcellularLocation>
        <location evidence="1">Cytoplasm</location>
    </subcellularLocation>
</comment>
<comment type="miscellaneous">
    <text evidence="1">The reaction proceeds by a bi uni uni bi ping pong mechanism.</text>
</comment>
<comment type="similarity">
    <text evidence="1">Belongs to the pantothenate synthetase family.</text>
</comment>
<accession>Q8Z9D3</accession>
<gene>
    <name evidence="1" type="primary">panC</name>
    <name type="ordered locus">STY0199</name>
    <name type="ordered locus">t0182</name>
</gene>
<organism>
    <name type="scientific">Salmonella typhi</name>
    <dbReference type="NCBI Taxonomy" id="90370"/>
    <lineage>
        <taxon>Bacteria</taxon>
        <taxon>Pseudomonadati</taxon>
        <taxon>Pseudomonadota</taxon>
        <taxon>Gammaproteobacteria</taxon>
        <taxon>Enterobacterales</taxon>
        <taxon>Enterobacteriaceae</taxon>
        <taxon>Salmonella</taxon>
    </lineage>
</organism>
<reference key="1">
    <citation type="journal article" date="2001" name="Nature">
        <title>Complete genome sequence of a multiple drug resistant Salmonella enterica serovar Typhi CT18.</title>
        <authorList>
            <person name="Parkhill J."/>
            <person name="Dougan G."/>
            <person name="James K.D."/>
            <person name="Thomson N.R."/>
            <person name="Pickard D."/>
            <person name="Wain J."/>
            <person name="Churcher C.M."/>
            <person name="Mungall K.L."/>
            <person name="Bentley S.D."/>
            <person name="Holden M.T.G."/>
            <person name="Sebaihia M."/>
            <person name="Baker S."/>
            <person name="Basham D."/>
            <person name="Brooks K."/>
            <person name="Chillingworth T."/>
            <person name="Connerton P."/>
            <person name="Cronin A."/>
            <person name="Davis P."/>
            <person name="Davies R.M."/>
            <person name="Dowd L."/>
            <person name="White N."/>
            <person name="Farrar J."/>
            <person name="Feltwell T."/>
            <person name="Hamlin N."/>
            <person name="Haque A."/>
            <person name="Hien T.T."/>
            <person name="Holroyd S."/>
            <person name="Jagels K."/>
            <person name="Krogh A."/>
            <person name="Larsen T.S."/>
            <person name="Leather S."/>
            <person name="Moule S."/>
            <person name="O'Gaora P."/>
            <person name="Parry C."/>
            <person name="Quail M.A."/>
            <person name="Rutherford K.M."/>
            <person name="Simmonds M."/>
            <person name="Skelton J."/>
            <person name="Stevens K."/>
            <person name="Whitehead S."/>
            <person name="Barrell B.G."/>
        </authorList>
    </citation>
    <scope>NUCLEOTIDE SEQUENCE [LARGE SCALE GENOMIC DNA]</scope>
    <source>
        <strain>CT18</strain>
    </source>
</reference>
<reference key="2">
    <citation type="journal article" date="2003" name="J. Bacteriol.">
        <title>Comparative genomics of Salmonella enterica serovar Typhi strains Ty2 and CT18.</title>
        <authorList>
            <person name="Deng W."/>
            <person name="Liou S.-R."/>
            <person name="Plunkett G. III"/>
            <person name="Mayhew G.F."/>
            <person name="Rose D.J."/>
            <person name="Burland V."/>
            <person name="Kodoyianni V."/>
            <person name="Schwartz D.C."/>
            <person name="Blattner F.R."/>
        </authorList>
    </citation>
    <scope>NUCLEOTIDE SEQUENCE [LARGE SCALE GENOMIC DNA]</scope>
    <source>
        <strain>ATCC 700931 / Ty2</strain>
    </source>
</reference>
<sequence length="284" mass="31849">MLIIETLPLLRQHIRRLRQEGKRVALVPTMGNLHDGHMKLVDEAKARADVVIVSIFVNPMQFDRPDDLVRYPRTLQEDCEKLNKRKVDYVFAPAVEEIYPQGLEGQTYVDVPGLSTMLEGTSRPGHFRGVSTIVSKLFNLIQPDIACFGEKDFQQLALIRKMVADMGYDIEIVGVPIIRAKDGLALSSRNAYLTAEQRKIAPGLYNVMNSIAEKLIAGNRELQEIIAIAEQELNEKGFRADDIQIRDADTLLELTETSKRAVILAAAWLGQARLIDNQSVTLAQ</sequence>
<proteinExistence type="inferred from homology"/>
<dbReference type="EC" id="6.3.2.1" evidence="1"/>
<dbReference type="EMBL" id="AL513382">
    <property type="protein sequence ID" value="CAD01335.1"/>
    <property type="molecule type" value="Genomic_DNA"/>
</dbReference>
<dbReference type="EMBL" id="AE014613">
    <property type="protein sequence ID" value="AAO67914.1"/>
    <property type="molecule type" value="Genomic_DNA"/>
</dbReference>
<dbReference type="RefSeq" id="NP_454790.1">
    <property type="nucleotide sequence ID" value="NC_003198.1"/>
</dbReference>
<dbReference type="RefSeq" id="WP_000905353.1">
    <property type="nucleotide sequence ID" value="NZ_WSUR01000009.1"/>
</dbReference>
<dbReference type="SMR" id="Q8Z9D3"/>
<dbReference type="STRING" id="220341.gene:17584237"/>
<dbReference type="KEGG" id="stt:t0182"/>
<dbReference type="KEGG" id="sty:STY0199"/>
<dbReference type="PATRIC" id="fig|220341.7.peg.202"/>
<dbReference type="eggNOG" id="COG0414">
    <property type="taxonomic scope" value="Bacteria"/>
</dbReference>
<dbReference type="HOGENOM" id="CLU_047148_0_0_6"/>
<dbReference type="OMA" id="CNHKLEP"/>
<dbReference type="OrthoDB" id="9773087at2"/>
<dbReference type="UniPathway" id="UPA00028">
    <property type="reaction ID" value="UER00005"/>
</dbReference>
<dbReference type="Proteomes" id="UP000000541">
    <property type="component" value="Chromosome"/>
</dbReference>
<dbReference type="Proteomes" id="UP000002670">
    <property type="component" value="Chromosome"/>
</dbReference>
<dbReference type="GO" id="GO:0005829">
    <property type="term" value="C:cytosol"/>
    <property type="evidence" value="ECO:0007669"/>
    <property type="project" value="TreeGrafter"/>
</dbReference>
<dbReference type="GO" id="GO:0005524">
    <property type="term" value="F:ATP binding"/>
    <property type="evidence" value="ECO:0007669"/>
    <property type="project" value="UniProtKB-KW"/>
</dbReference>
<dbReference type="GO" id="GO:0004592">
    <property type="term" value="F:pantoate-beta-alanine ligase activity"/>
    <property type="evidence" value="ECO:0007669"/>
    <property type="project" value="UniProtKB-UniRule"/>
</dbReference>
<dbReference type="GO" id="GO:0015940">
    <property type="term" value="P:pantothenate biosynthetic process"/>
    <property type="evidence" value="ECO:0007669"/>
    <property type="project" value="UniProtKB-UniRule"/>
</dbReference>
<dbReference type="CDD" id="cd00560">
    <property type="entry name" value="PanC"/>
    <property type="match status" value="1"/>
</dbReference>
<dbReference type="FunFam" id="3.30.1300.10:FF:000001">
    <property type="entry name" value="Pantothenate synthetase"/>
    <property type="match status" value="1"/>
</dbReference>
<dbReference type="FunFam" id="3.40.50.620:FF:000013">
    <property type="entry name" value="Pantothenate synthetase"/>
    <property type="match status" value="1"/>
</dbReference>
<dbReference type="Gene3D" id="3.40.50.620">
    <property type="entry name" value="HUPs"/>
    <property type="match status" value="1"/>
</dbReference>
<dbReference type="Gene3D" id="3.30.1300.10">
    <property type="entry name" value="Pantoate-beta-alanine ligase, C-terminal domain"/>
    <property type="match status" value="1"/>
</dbReference>
<dbReference type="HAMAP" id="MF_00158">
    <property type="entry name" value="PanC"/>
    <property type="match status" value="1"/>
</dbReference>
<dbReference type="InterPro" id="IPR004821">
    <property type="entry name" value="Cyt_trans-like"/>
</dbReference>
<dbReference type="InterPro" id="IPR003721">
    <property type="entry name" value="Pantoate_ligase"/>
</dbReference>
<dbReference type="InterPro" id="IPR042176">
    <property type="entry name" value="Pantoate_ligase_C"/>
</dbReference>
<dbReference type="InterPro" id="IPR014729">
    <property type="entry name" value="Rossmann-like_a/b/a_fold"/>
</dbReference>
<dbReference type="NCBIfam" id="TIGR00125">
    <property type="entry name" value="cyt_tran_rel"/>
    <property type="match status" value="1"/>
</dbReference>
<dbReference type="NCBIfam" id="TIGR00018">
    <property type="entry name" value="panC"/>
    <property type="match status" value="1"/>
</dbReference>
<dbReference type="PANTHER" id="PTHR21299">
    <property type="entry name" value="CYTIDYLATE KINASE/PANTOATE-BETA-ALANINE LIGASE"/>
    <property type="match status" value="1"/>
</dbReference>
<dbReference type="PANTHER" id="PTHR21299:SF1">
    <property type="entry name" value="PANTOATE--BETA-ALANINE LIGASE"/>
    <property type="match status" value="1"/>
</dbReference>
<dbReference type="Pfam" id="PF02569">
    <property type="entry name" value="Pantoate_ligase"/>
    <property type="match status" value="1"/>
</dbReference>
<dbReference type="SUPFAM" id="SSF52374">
    <property type="entry name" value="Nucleotidylyl transferase"/>
    <property type="match status" value="1"/>
</dbReference>